<name>RS2_NOVAD</name>
<keyword id="KW-1185">Reference proteome</keyword>
<keyword id="KW-0687">Ribonucleoprotein</keyword>
<keyword id="KW-0689">Ribosomal protein</keyword>
<sequence length="251" mass="26871">MAAPVVTMHQLIEAGAHFGHQTHRWNPRMKPYIFGARNGIHILDLSQTVPLMARALEFISATVQAGGKVLFVGTKRQAQEPIAQAARASGQHYVNHRWLGGMLTNWKTISGSIKRFKALEEQLAGDTAGLTKKEVLQLTRERDKFELSLGGIRDMGGIPDVMFVIDANKEELAIKEANVLGIPVVAILDSNVSPEGIAFPIPANDDASRAIRLYCEAVAAAATKGGRDAALASGADLGAMAEPLAEEAAEV</sequence>
<proteinExistence type="inferred from homology"/>
<gene>
    <name evidence="1" type="primary">rpsB</name>
    <name type="ordered locus">Saro_1369</name>
</gene>
<protein>
    <recommendedName>
        <fullName evidence="1">Small ribosomal subunit protein uS2</fullName>
    </recommendedName>
    <alternativeName>
        <fullName evidence="2">30S ribosomal protein S2</fullName>
    </alternativeName>
</protein>
<feature type="chain" id="PRO_1000004012" description="Small ribosomal subunit protein uS2">
    <location>
        <begin position="1"/>
        <end position="251"/>
    </location>
</feature>
<accession>Q2G8L0</accession>
<evidence type="ECO:0000255" key="1">
    <source>
        <dbReference type="HAMAP-Rule" id="MF_00291"/>
    </source>
</evidence>
<evidence type="ECO:0000305" key="2"/>
<comment type="similarity">
    <text evidence="1">Belongs to the universal ribosomal protein uS2 family.</text>
</comment>
<organism>
    <name type="scientific">Novosphingobium aromaticivorans (strain ATCC 700278 / DSM 12444 / CCUG 56034 / CIP 105152 / NBRC 16084 / F199)</name>
    <dbReference type="NCBI Taxonomy" id="279238"/>
    <lineage>
        <taxon>Bacteria</taxon>
        <taxon>Pseudomonadati</taxon>
        <taxon>Pseudomonadota</taxon>
        <taxon>Alphaproteobacteria</taxon>
        <taxon>Sphingomonadales</taxon>
        <taxon>Sphingomonadaceae</taxon>
        <taxon>Novosphingobium</taxon>
    </lineage>
</organism>
<reference key="1">
    <citation type="submission" date="2006-01" db="EMBL/GenBank/DDBJ databases">
        <title>Complete sequence of Novosphingobium aromaticivorans DSM 12444.</title>
        <authorList>
            <consortium name="US DOE Joint Genome Institute"/>
            <person name="Copeland A."/>
            <person name="Lucas S."/>
            <person name="Lapidus A."/>
            <person name="Barry K."/>
            <person name="Detter J.C."/>
            <person name="Glavina T."/>
            <person name="Hammon N."/>
            <person name="Israni S."/>
            <person name="Pitluck S."/>
            <person name="Chain P."/>
            <person name="Malfatti S."/>
            <person name="Shin M."/>
            <person name="Vergez L."/>
            <person name="Schmutz J."/>
            <person name="Larimer F."/>
            <person name="Land M."/>
            <person name="Kyrpides N."/>
            <person name="Ivanova N."/>
            <person name="Fredrickson J."/>
            <person name="Balkwill D."/>
            <person name="Romine M.F."/>
            <person name="Richardson P."/>
        </authorList>
    </citation>
    <scope>NUCLEOTIDE SEQUENCE [LARGE SCALE GENOMIC DNA]</scope>
    <source>
        <strain>ATCC 700278 / DSM 12444 / CCUG 56034 / CIP 105152 / NBRC 16084 / F199</strain>
    </source>
</reference>
<dbReference type="EMBL" id="CP000248">
    <property type="protein sequence ID" value="ABD25813.1"/>
    <property type="molecule type" value="Genomic_DNA"/>
</dbReference>
<dbReference type="RefSeq" id="WP_011445027.1">
    <property type="nucleotide sequence ID" value="NC_007794.1"/>
</dbReference>
<dbReference type="SMR" id="Q2G8L0"/>
<dbReference type="STRING" id="279238.Saro_1369"/>
<dbReference type="KEGG" id="nar:Saro_1369"/>
<dbReference type="eggNOG" id="COG0052">
    <property type="taxonomic scope" value="Bacteria"/>
</dbReference>
<dbReference type="HOGENOM" id="CLU_040318_2_1_5"/>
<dbReference type="Proteomes" id="UP000009134">
    <property type="component" value="Chromosome"/>
</dbReference>
<dbReference type="GO" id="GO:0022627">
    <property type="term" value="C:cytosolic small ribosomal subunit"/>
    <property type="evidence" value="ECO:0007669"/>
    <property type="project" value="TreeGrafter"/>
</dbReference>
<dbReference type="GO" id="GO:0003735">
    <property type="term" value="F:structural constituent of ribosome"/>
    <property type="evidence" value="ECO:0007669"/>
    <property type="project" value="InterPro"/>
</dbReference>
<dbReference type="GO" id="GO:0006412">
    <property type="term" value="P:translation"/>
    <property type="evidence" value="ECO:0007669"/>
    <property type="project" value="UniProtKB-UniRule"/>
</dbReference>
<dbReference type="CDD" id="cd01425">
    <property type="entry name" value="RPS2"/>
    <property type="match status" value="1"/>
</dbReference>
<dbReference type="FunFam" id="1.10.287.610:FF:000001">
    <property type="entry name" value="30S ribosomal protein S2"/>
    <property type="match status" value="1"/>
</dbReference>
<dbReference type="Gene3D" id="3.40.50.10490">
    <property type="entry name" value="Glucose-6-phosphate isomerase like protein, domain 1"/>
    <property type="match status" value="1"/>
</dbReference>
<dbReference type="Gene3D" id="1.10.287.610">
    <property type="entry name" value="Helix hairpin bin"/>
    <property type="match status" value="1"/>
</dbReference>
<dbReference type="HAMAP" id="MF_00291_B">
    <property type="entry name" value="Ribosomal_uS2_B"/>
    <property type="match status" value="1"/>
</dbReference>
<dbReference type="InterPro" id="IPR001865">
    <property type="entry name" value="Ribosomal_uS2"/>
</dbReference>
<dbReference type="InterPro" id="IPR005706">
    <property type="entry name" value="Ribosomal_uS2_bac/mit/plastid"/>
</dbReference>
<dbReference type="InterPro" id="IPR018130">
    <property type="entry name" value="Ribosomal_uS2_CS"/>
</dbReference>
<dbReference type="InterPro" id="IPR023591">
    <property type="entry name" value="Ribosomal_uS2_flav_dom_sf"/>
</dbReference>
<dbReference type="NCBIfam" id="TIGR01011">
    <property type="entry name" value="rpsB_bact"/>
    <property type="match status" value="1"/>
</dbReference>
<dbReference type="PANTHER" id="PTHR12534">
    <property type="entry name" value="30S RIBOSOMAL PROTEIN S2 PROKARYOTIC AND ORGANELLAR"/>
    <property type="match status" value="1"/>
</dbReference>
<dbReference type="PANTHER" id="PTHR12534:SF0">
    <property type="entry name" value="SMALL RIBOSOMAL SUBUNIT PROTEIN US2M"/>
    <property type="match status" value="1"/>
</dbReference>
<dbReference type="Pfam" id="PF00318">
    <property type="entry name" value="Ribosomal_S2"/>
    <property type="match status" value="1"/>
</dbReference>
<dbReference type="PRINTS" id="PR00395">
    <property type="entry name" value="RIBOSOMALS2"/>
</dbReference>
<dbReference type="SUPFAM" id="SSF52313">
    <property type="entry name" value="Ribosomal protein S2"/>
    <property type="match status" value="1"/>
</dbReference>
<dbReference type="PROSITE" id="PS00962">
    <property type="entry name" value="RIBOSOMAL_S2_1"/>
    <property type="match status" value="1"/>
</dbReference>
<dbReference type="PROSITE" id="PS00963">
    <property type="entry name" value="RIBOSOMAL_S2_2"/>
    <property type="match status" value="1"/>
</dbReference>